<reference key="1">
    <citation type="journal article" date="2005" name="J. Bacteriol.">
        <title>Insights on evolution of virulence and resistance from the complete genome analysis of an early methicillin-resistant Staphylococcus aureus strain and a biofilm-producing methicillin-resistant Staphylococcus epidermidis strain.</title>
        <authorList>
            <person name="Gill S.R."/>
            <person name="Fouts D.E."/>
            <person name="Archer G.L."/>
            <person name="Mongodin E.F."/>
            <person name="DeBoy R.T."/>
            <person name="Ravel J."/>
            <person name="Paulsen I.T."/>
            <person name="Kolonay J.F."/>
            <person name="Brinkac L.M."/>
            <person name="Beanan M.J."/>
            <person name="Dodson R.J."/>
            <person name="Daugherty S.C."/>
            <person name="Madupu R."/>
            <person name="Angiuoli S.V."/>
            <person name="Durkin A.S."/>
            <person name="Haft D.H."/>
            <person name="Vamathevan J.J."/>
            <person name="Khouri H."/>
            <person name="Utterback T.R."/>
            <person name="Lee C."/>
            <person name="Dimitrov G."/>
            <person name="Jiang L."/>
            <person name="Qin H."/>
            <person name="Weidman J."/>
            <person name="Tran K."/>
            <person name="Kang K.H."/>
            <person name="Hance I.R."/>
            <person name="Nelson K.E."/>
            <person name="Fraser C.M."/>
        </authorList>
    </citation>
    <scope>NUCLEOTIDE SEQUENCE [LARGE SCALE GENOMIC DNA]</scope>
    <source>
        <strain>ATCC 35984 / DSM 28319 / BCRC 17069 / CCUG 31568 / BM 3577 / RP62A</strain>
    </source>
</reference>
<dbReference type="EMBL" id="CP000029">
    <property type="protein sequence ID" value="AAW54494.1"/>
    <property type="molecule type" value="Genomic_DNA"/>
</dbReference>
<dbReference type="RefSeq" id="WP_001831221.1">
    <property type="nucleotide sequence ID" value="NC_002976.3"/>
</dbReference>
<dbReference type="SMR" id="Q5HNW1"/>
<dbReference type="STRING" id="176279.SERP1153"/>
<dbReference type="GeneID" id="50018612"/>
<dbReference type="KEGG" id="ser:SERP1153"/>
<dbReference type="eggNOG" id="COG0268">
    <property type="taxonomic scope" value="Bacteria"/>
</dbReference>
<dbReference type="HOGENOM" id="CLU_160655_1_1_9"/>
<dbReference type="Proteomes" id="UP000000531">
    <property type="component" value="Chromosome"/>
</dbReference>
<dbReference type="GO" id="GO:0005829">
    <property type="term" value="C:cytosol"/>
    <property type="evidence" value="ECO:0007669"/>
    <property type="project" value="TreeGrafter"/>
</dbReference>
<dbReference type="GO" id="GO:0015935">
    <property type="term" value="C:small ribosomal subunit"/>
    <property type="evidence" value="ECO:0007669"/>
    <property type="project" value="TreeGrafter"/>
</dbReference>
<dbReference type="GO" id="GO:0070181">
    <property type="term" value="F:small ribosomal subunit rRNA binding"/>
    <property type="evidence" value="ECO:0007669"/>
    <property type="project" value="TreeGrafter"/>
</dbReference>
<dbReference type="GO" id="GO:0003735">
    <property type="term" value="F:structural constituent of ribosome"/>
    <property type="evidence" value="ECO:0007669"/>
    <property type="project" value="InterPro"/>
</dbReference>
<dbReference type="GO" id="GO:0006412">
    <property type="term" value="P:translation"/>
    <property type="evidence" value="ECO:0007669"/>
    <property type="project" value="UniProtKB-UniRule"/>
</dbReference>
<dbReference type="Gene3D" id="1.20.58.110">
    <property type="entry name" value="Ribosomal protein S20"/>
    <property type="match status" value="1"/>
</dbReference>
<dbReference type="HAMAP" id="MF_00500">
    <property type="entry name" value="Ribosomal_bS20"/>
    <property type="match status" value="1"/>
</dbReference>
<dbReference type="InterPro" id="IPR002583">
    <property type="entry name" value="Ribosomal_bS20"/>
</dbReference>
<dbReference type="InterPro" id="IPR036510">
    <property type="entry name" value="Ribosomal_bS20_sf"/>
</dbReference>
<dbReference type="NCBIfam" id="TIGR00029">
    <property type="entry name" value="S20"/>
    <property type="match status" value="1"/>
</dbReference>
<dbReference type="PANTHER" id="PTHR33398">
    <property type="entry name" value="30S RIBOSOMAL PROTEIN S20"/>
    <property type="match status" value="1"/>
</dbReference>
<dbReference type="PANTHER" id="PTHR33398:SF1">
    <property type="entry name" value="SMALL RIBOSOMAL SUBUNIT PROTEIN BS20C"/>
    <property type="match status" value="1"/>
</dbReference>
<dbReference type="Pfam" id="PF01649">
    <property type="entry name" value="Ribosomal_S20p"/>
    <property type="match status" value="1"/>
</dbReference>
<dbReference type="SUPFAM" id="SSF46992">
    <property type="entry name" value="Ribosomal protein S20"/>
    <property type="match status" value="1"/>
</dbReference>
<comment type="function">
    <text evidence="1">Binds directly to 16S ribosomal RNA.</text>
</comment>
<comment type="similarity">
    <text evidence="1">Belongs to the bacterial ribosomal protein bS20 family.</text>
</comment>
<keyword id="KW-1185">Reference proteome</keyword>
<keyword id="KW-0687">Ribonucleoprotein</keyword>
<keyword id="KW-0689">Ribosomal protein</keyword>
<keyword id="KW-0694">RNA-binding</keyword>
<keyword id="KW-0699">rRNA-binding</keyword>
<feature type="chain" id="PRO_0000224953" description="Small ribosomal subunit protein bS20">
    <location>
        <begin position="1"/>
        <end position="83"/>
    </location>
</feature>
<feature type="region of interest" description="Disordered" evidence="2">
    <location>
        <begin position="1"/>
        <end position="21"/>
    </location>
</feature>
<feature type="compositionally biased region" description="Basic and acidic residues" evidence="2">
    <location>
        <begin position="12"/>
        <end position="21"/>
    </location>
</feature>
<organism>
    <name type="scientific">Staphylococcus epidermidis (strain ATCC 35984 / DSM 28319 / BCRC 17069 / CCUG 31568 / BM 3577 / RP62A)</name>
    <dbReference type="NCBI Taxonomy" id="176279"/>
    <lineage>
        <taxon>Bacteria</taxon>
        <taxon>Bacillati</taxon>
        <taxon>Bacillota</taxon>
        <taxon>Bacilli</taxon>
        <taxon>Bacillales</taxon>
        <taxon>Staphylococcaceae</taxon>
        <taxon>Staphylococcus</taxon>
    </lineage>
</organism>
<name>RS20_STAEQ</name>
<accession>Q5HNW1</accession>
<proteinExistence type="inferred from homology"/>
<protein>
    <recommendedName>
        <fullName evidence="1">Small ribosomal subunit protein bS20</fullName>
    </recommendedName>
    <alternativeName>
        <fullName evidence="3">30S ribosomal protein S20</fullName>
    </alternativeName>
</protein>
<evidence type="ECO:0000255" key="1">
    <source>
        <dbReference type="HAMAP-Rule" id="MF_00500"/>
    </source>
</evidence>
<evidence type="ECO:0000256" key="2">
    <source>
        <dbReference type="SAM" id="MobiDB-lite"/>
    </source>
</evidence>
<evidence type="ECO:0000305" key="3"/>
<gene>
    <name evidence="1" type="primary">rpsT</name>
    <name type="ordered locus">SERP1153</name>
</gene>
<sequence length="83" mass="9341">MPNIKSAIKRVRTTETAEERNISKKNAMRTAVKRAKTAISTDAENKDELLRFAIKQVDKASQSNLIHSNKADRIKSKLMSANK</sequence>